<comment type="similarity">
    <text evidence="1">Belongs to the orbivirus non-structural protein NS1 family.</text>
</comment>
<organism>
    <name type="scientific">Bluetongue virus 1 (isolate Australia)</name>
    <name type="common">BTV 1</name>
    <dbReference type="NCBI Taxonomy" id="10904"/>
    <lineage>
        <taxon>Viruses</taxon>
        <taxon>Riboviria</taxon>
        <taxon>Orthornavirae</taxon>
        <taxon>Duplornaviricota</taxon>
        <taxon>Resentoviricetes</taxon>
        <taxon>Reovirales</taxon>
        <taxon>Sedoreoviridae</taxon>
        <taxon>Orbivirus</taxon>
        <taxon>Bluetongue virus</taxon>
    </lineage>
</organism>
<feature type="chain" id="PRO_0000222662" description="Non-structural protein NS1">
    <location>
        <begin position="1"/>
        <end position="552"/>
    </location>
</feature>
<proteinExistence type="inferred from homology"/>
<sequence length="552" mass="64593">MERFLRKYNISGDYANATRSILAISPQWTCSHLKRNCLFNGMCAKQNFERAMIAATDAEEPIKAIRLIELAKEAMYDRETVWLQCFKSFSQPYEEDIEGKIKRCGAQLLEDYRKSGMMEEAVKQSALINSERVRLDDSLSAIPYIYVPIKEGQIVNPTFISRYRQIAYYFYNPDAADDWIDPNLFGVRGQHHQIKREVERQINTCPYTGYKGGIFQVMYLPIQLINFLRMDDFARHFNRYASMAIQQYLRVGYLEEIRYVQQLFGKVPSGEFPLHQMMLMRRDFPTRDRNIVEARVKRSGDENWQSWLLPMVLVREGLDQQEKWEWLLEYMDRKHICQLCYLKHSKQIQTCSVIDVRASELIGCSPFRTVKIEEHVGNEPIFKTKLIRDQQIGRIGDHYYTTSCYTGAEALVTTAIHIHRWIRGCGIWNDEGWQEGVFMLGRVLLRWELTKAQRSALLRLFCFVCYGYAPRAYGTVPDWNNLGSFLDIILKGPELSEDEDERAYATMFEMVRCIITLCYAERVHFAGFTAPACESGEVINLAARMSQMWMEY</sequence>
<dbReference type="PIR" id="A60000">
    <property type="entry name" value="A60000"/>
</dbReference>
<dbReference type="SMR" id="P33471"/>
<dbReference type="InterPro" id="IPR002630">
    <property type="entry name" value="Orbi_NS1"/>
</dbReference>
<dbReference type="Pfam" id="PF01718">
    <property type="entry name" value="Orbi_NS1"/>
    <property type="match status" value="1"/>
</dbReference>
<reference key="1">
    <citation type="journal article" date="1988" name="Virus Res.">
        <title>Nucleotide and deduced amino acid sequences of the non-structural protein, NS1, of Australian and South African bluetongue virus serotype 1.</title>
        <authorList>
            <person name="Gould A.R."/>
            <person name="Pritchard L.I."/>
            <person name="Tavaria M.D."/>
        </authorList>
    </citation>
    <scope>NUCLEOTIDE SEQUENCE</scope>
</reference>
<protein>
    <recommendedName>
        <fullName>Non-structural protein NS1</fullName>
    </recommendedName>
</protein>
<organismHost>
    <name type="scientific">Antilocapra americana</name>
    <name type="common">Pronghorn</name>
    <dbReference type="NCBI Taxonomy" id="9891"/>
</organismHost>
<organismHost>
    <name type="scientific">Bos taurus</name>
    <name type="common">Bovine</name>
    <dbReference type="NCBI Taxonomy" id="9913"/>
</organismHost>
<organismHost>
    <name type="scientific">Capra hircus</name>
    <name type="common">Goat</name>
    <dbReference type="NCBI Taxonomy" id="9925"/>
</organismHost>
<organismHost>
    <name type="scientific">Culicoides variipennis</name>
    <name type="common">Biting midge</name>
    <dbReference type="NCBI Taxonomy" id="46212"/>
</organismHost>
<organismHost>
    <name type="scientific">Ovis aries</name>
    <name type="common">Sheep</name>
    <dbReference type="NCBI Taxonomy" id="9940"/>
</organismHost>
<evidence type="ECO:0000305" key="1"/>
<gene>
    <name type="primary">Segment-5</name>
</gene>
<name>VNS1_BTV1A</name>
<accession>P33471</accession>